<reference key="1">
    <citation type="submission" date="2011-09" db="EMBL/GenBank/DDBJ databases">
        <title>The vancomycin biosynthetic gene cluster.</title>
        <authorList>
            <person name="Woertz T."/>
            <person name="Dietz S."/>
            <person name="Zerbe K."/>
            <person name="Robinson J.A."/>
        </authorList>
    </citation>
    <scope>NUCLEOTIDE SEQUENCE [GENOMIC DNA]</scope>
    <source>
        <strain>ATCC19795</strain>
    </source>
</reference>
<reference key="2">
    <citation type="journal article" date="2001" name="Proc. Natl. Acad. Sci. U.S.A.">
        <title>Glycopeptide antibiotic biosynthesis: enzymatic assembly of the dedicated amino acid monomer (S)-3,5-dihydroxyphenylglycine.</title>
        <authorList>
            <person name="Chen H."/>
            <person name="Tseng C.C."/>
            <person name="Hubbard B.K."/>
            <person name="Walsh C.T."/>
        </authorList>
    </citation>
    <scope>FUNCTION</scope>
    <scope>CATALYTIC ACTIVITY</scope>
    <scope>BIOPHYSICOCHEMICAL PROPERTIES</scope>
    <source>
        <strain>NRRL18098</strain>
    </source>
</reference>
<dbReference type="EC" id="2.3.1.246" evidence="2"/>
<dbReference type="EMBL" id="HE589771">
    <property type="protein sequence ID" value="CCD33159.1"/>
    <property type="molecule type" value="Genomic_DNA"/>
</dbReference>
<dbReference type="SMR" id="G4V4T4"/>
<dbReference type="STRING" id="31958.SD37_33610"/>
<dbReference type="eggNOG" id="COG3424">
    <property type="taxonomic scope" value="Bacteria"/>
</dbReference>
<dbReference type="UniPathway" id="UPA00162"/>
<dbReference type="GO" id="GO:0016747">
    <property type="term" value="F:acyltransferase activity, transferring groups other than amino-acyl groups"/>
    <property type="evidence" value="ECO:0000314"/>
    <property type="project" value="UniProtKB"/>
</dbReference>
<dbReference type="GO" id="GO:0030639">
    <property type="term" value="P:polyketide biosynthetic process"/>
    <property type="evidence" value="ECO:0007669"/>
    <property type="project" value="TreeGrafter"/>
</dbReference>
<dbReference type="GO" id="GO:0033072">
    <property type="term" value="P:vancomycin biosynthetic process"/>
    <property type="evidence" value="ECO:0007669"/>
    <property type="project" value="UniProtKB-UniPathway"/>
</dbReference>
<dbReference type="CDD" id="cd00831">
    <property type="entry name" value="CHS_like"/>
    <property type="match status" value="1"/>
</dbReference>
<dbReference type="FunFam" id="3.40.47.10:FF:000103">
    <property type="entry name" value="3,5-dihydroxyphenylacetyl-CoA synthase"/>
    <property type="match status" value="1"/>
</dbReference>
<dbReference type="FunFam" id="3.40.47.10:FF:000014">
    <property type="entry name" value="Chalcone synthase 1"/>
    <property type="match status" value="1"/>
</dbReference>
<dbReference type="Gene3D" id="3.40.47.10">
    <property type="match status" value="2"/>
</dbReference>
<dbReference type="InterPro" id="IPR012328">
    <property type="entry name" value="Chalcone/stilbene_synt_C"/>
</dbReference>
<dbReference type="InterPro" id="IPR001099">
    <property type="entry name" value="Chalcone/stilbene_synt_N"/>
</dbReference>
<dbReference type="InterPro" id="IPR053446">
    <property type="entry name" value="DPA-CoA_Synthase"/>
</dbReference>
<dbReference type="InterPro" id="IPR011141">
    <property type="entry name" value="Polyketide_synthase_type-III"/>
</dbReference>
<dbReference type="InterPro" id="IPR016039">
    <property type="entry name" value="Thiolase-like"/>
</dbReference>
<dbReference type="NCBIfam" id="NF042429">
    <property type="entry name" value="DHPHCoAsyn_DpgA"/>
    <property type="match status" value="1"/>
</dbReference>
<dbReference type="PANTHER" id="PTHR11877">
    <property type="entry name" value="HYDROXYMETHYLGLUTARYL-COA SYNTHASE"/>
    <property type="match status" value="1"/>
</dbReference>
<dbReference type="PANTHER" id="PTHR11877:SF46">
    <property type="entry name" value="TYPE III POLYKETIDE SYNTHASE A"/>
    <property type="match status" value="1"/>
</dbReference>
<dbReference type="Pfam" id="PF02797">
    <property type="entry name" value="Chal_sti_synt_C"/>
    <property type="match status" value="1"/>
</dbReference>
<dbReference type="Pfam" id="PF00195">
    <property type="entry name" value="Chal_sti_synt_N"/>
    <property type="match status" value="1"/>
</dbReference>
<dbReference type="PIRSF" id="PIRSF000451">
    <property type="entry name" value="PKS_III"/>
    <property type="match status" value="1"/>
</dbReference>
<dbReference type="SUPFAM" id="SSF53901">
    <property type="entry name" value="Thiolase-like"/>
    <property type="match status" value="1"/>
</dbReference>
<proteinExistence type="evidence at protein level"/>
<keyword id="KW-0045">Antibiotic biosynthesis</keyword>
<keyword id="KW-0808">Transferase</keyword>
<evidence type="ECO:0000250" key="1">
    <source>
        <dbReference type="UniProtKB" id="Q939X3"/>
    </source>
</evidence>
<evidence type="ECO:0000269" key="2">
    <source>
    </source>
</evidence>
<evidence type="ECO:0000303" key="3">
    <source>
    </source>
</evidence>
<evidence type="ECO:0000305" key="4"/>
<evidence type="ECO:0000305" key="5">
    <source>
    </source>
</evidence>
<sequence>MDVSMTTGIELTEELSVLNGLTEITRFAGVGTAVSETSYSQTELLDILDVEDPKIRSVFLNSAIDRRFLTLPPENPGGGRLAEPQGDLLDKHKKIAVDMGCRALEACLKSAGATLSDLRHLCCVTSTGFLTPGLSALIIREMGIDPHCSRSDIVGMGCNAGLNALNVVSGWSAAHPGELGVVLCSEACSAAYALDGTMRTAVVNSLFGDGSAALAVISGDGRVAGPRVLKFASYIITDAVDAMRYDWDRDQDRFSFFLDPQIPYVVGAHAEIVVDRLLSGTGLRRSDIGHWLVHSGGKKVVDAVVVNLGLSRHDVRHTTGVLRDYGNLSSGSFLFSYERLSEEDVTRPGDYGVLMTMGPGSTIEMALIQW</sequence>
<feature type="chain" id="PRO_0000435602" description="3,5-dihydroxyphenylacetyl-CoA synthase">
    <location>
        <begin position="1"/>
        <end position="370"/>
    </location>
</feature>
<feature type="active site" evidence="1">
    <location>
        <position position="158"/>
    </location>
</feature>
<accession>G4V4T4</accession>
<name>DPGA_AMYOR</name>
<comment type="function">
    <text evidence="2">Involved in the biosynthesis of the nonproteinogenic amino acid monomer (S)-3,5-dihydroxyphenylglycine (Dpg) responsible of the production of vancomycin and teicoplanin antibiotics. Catalyzes the Claisen condensation of four molecules of malonyl-CoA to yield 3,5-dihydroxyphenylacetyl-CoA (DPA-CoA) and three free coenzyme A (CoA). DpgA requires the presence of the dehydratases DpgB and DpgD to facilitate the aromatization of the DPA-S-DgpA or DPA-S-CoA intermediate.</text>
</comment>
<comment type="catalytic activity">
    <reaction evidence="2">
        <text>4 malonyl-CoA + 4 H(+) = (3,5-dihydroxyphenyl)acetyl-CoA + 4 CO2 + 3 CoA + H2O</text>
        <dbReference type="Rhea" id="RHEA:44744"/>
        <dbReference type="ChEBI" id="CHEBI:15377"/>
        <dbReference type="ChEBI" id="CHEBI:15378"/>
        <dbReference type="ChEBI" id="CHEBI:16526"/>
        <dbReference type="ChEBI" id="CHEBI:57287"/>
        <dbReference type="ChEBI" id="CHEBI:57384"/>
        <dbReference type="ChEBI" id="CHEBI:84554"/>
        <dbReference type="EC" id="2.3.1.246"/>
    </reaction>
</comment>
<comment type="biophysicochemical properties">
    <kinetics>
        <KM evidence="2">5 uM for malonyl-CoA</KM>
        <text evidence="2">kcat is 1 min(-1) for transferase activity with malonyl-CoA as substrate.</text>
    </kinetics>
</comment>
<comment type="pathway">
    <text evidence="5">Antibiotic biosynthesis; vancomycin biosynthesis.</text>
</comment>
<comment type="similarity">
    <text evidence="4">Belongs to the thiolase-like superfamily. Chalcone/stilbene synthases family.</text>
</comment>
<organism>
    <name type="scientific">Amycolatopsis orientalis</name>
    <name type="common">Nocardia orientalis</name>
    <dbReference type="NCBI Taxonomy" id="31958"/>
    <lineage>
        <taxon>Bacteria</taxon>
        <taxon>Bacillati</taxon>
        <taxon>Actinomycetota</taxon>
        <taxon>Actinomycetes</taxon>
        <taxon>Pseudonocardiales</taxon>
        <taxon>Pseudonocardiaceae</taxon>
        <taxon>Amycolatopsis</taxon>
    </lineage>
</organism>
<gene>
    <name type="primary">dpgA</name>
</gene>
<protein>
    <recommendedName>
        <fullName evidence="3">3,5-dihydroxyphenylacetyl-CoA synthase</fullName>
        <ecNumber evidence="2">2.3.1.246</ecNumber>
    </recommendedName>
    <alternativeName>
        <fullName evidence="4">3,5-dihydroxyphenylacetyl-CoA synthase polyketide synthase type III</fullName>
    </alternativeName>
</protein>